<protein>
    <recommendedName>
        <fullName evidence="4">UDP-glucosyltransferase 103</fullName>
        <shortName evidence="4">UGTPg103</shortName>
        <ecNumber evidence="6">2.4.1.366</ecNumber>
    </recommendedName>
</protein>
<comment type="function">
    <text evidence="3">Probable component of the triterpene saponins (e.g. ginsenosides) biosynthetic pathway (PubMed:26032089). No detectable activity toward protopanaxatriol (PPT) (PubMed:26032089).</text>
</comment>
<comment type="catalytic activity">
    <reaction evidence="6">
        <text>(20S)-ginsenoside F1 + UDP-alpha-D-glucose = (20S)-ginsenoside Rg1 + UDP + H(+)</text>
        <dbReference type="Rhea" id="RHEA:58008"/>
        <dbReference type="ChEBI" id="CHEBI:15378"/>
        <dbReference type="ChEBI" id="CHEBI:58223"/>
        <dbReference type="ChEBI" id="CHEBI:58885"/>
        <dbReference type="ChEBI" id="CHEBI:67987"/>
        <dbReference type="ChEBI" id="CHEBI:77150"/>
        <dbReference type="EC" id="2.4.1.366"/>
    </reaction>
    <physiologicalReaction direction="left-to-right" evidence="6">
        <dbReference type="Rhea" id="RHEA:58009"/>
    </physiologicalReaction>
</comment>
<comment type="pathway">
    <text evidence="5">Secondary metabolite biosynthesis; terpenoid biosynthesis.</text>
</comment>
<comment type="similarity">
    <text evidence="5">Belongs to the UDP-glycosyltransferase family.</text>
</comment>
<name>UGT13_PANGI</name>
<gene>
    <name evidence="4" type="primary">UGT103</name>
</gene>
<organism>
    <name type="scientific">Panax ginseng</name>
    <name type="common">Korean ginseng</name>
    <dbReference type="NCBI Taxonomy" id="4054"/>
    <lineage>
        <taxon>Eukaryota</taxon>
        <taxon>Viridiplantae</taxon>
        <taxon>Streptophyta</taxon>
        <taxon>Embryophyta</taxon>
        <taxon>Tracheophyta</taxon>
        <taxon>Spermatophyta</taxon>
        <taxon>Magnoliopsida</taxon>
        <taxon>eudicotyledons</taxon>
        <taxon>Gunneridae</taxon>
        <taxon>Pentapetalae</taxon>
        <taxon>asterids</taxon>
        <taxon>campanulids</taxon>
        <taxon>Apiales</taxon>
        <taxon>Araliaceae</taxon>
        <taxon>Panax</taxon>
    </lineage>
</organism>
<proteinExistence type="evidence at protein level"/>
<feature type="chain" id="PRO_0000446968" description="UDP-glucosyltransferase 103">
    <location>
        <begin position="1"/>
        <end position="472"/>
    </location>
</feature>
<feature type="active site" description="Proton acceptor" evidence="1">
    <location>
        <position position="15"/>
    </location>
</feature>
<feature type="active site" description="Charge relay" evidence="1">
    <location>
        <position position="117"/>
    </location>
</feature>
<feature type="binding site" evidence="2">
    <location>
        <position position="15"/>
    </location>
    <ligand>
        <name>an anthocyanidin</name>
        <dbReference type="ChEBI" id="CHEBI:143576"/>
    </ligand>
</feature>
<feature type="binding site" evidence="1">
    <location>
        <position position="344"/>
    </location>
    <ligand>
        <name>UDP-alpha-D-glucose</name>
        <dbReference type="ChEBI" id="CHEBI:58885"/>
    </ligand>
</feature>
<feature type="binding site" evidence="1">
    <location>
        <position position="346"/>
    </location>
    <ligand>
        <name>UDP-alpha-D-glucose</name>
        <dbReference type="ChEBI" id="CHEBI:58885"/>
    </ligand>
</feature>
<feature type="binding site" evidence="1">
    <location>
        <position position="361"/>
    </location>
    <ligand>
        <name>UDP-alpha-D-glucose</name>
        <dbReference type="ChEBI" id="CHEBI:58885"/>
    </ligand>
</feature>
<feature type="binding site" evidence="1">
    <location>
        <position position="364"/>
    </location>
    <ligand>
        <name>UDP-alpha-D-glucose</name>
        <dbReference type="ChEBI" id="CHEBI:58885"/>
    </ligand>
</feature>
<feature type="binding site" evidence="1">
    <location>
        <position position="365"/>
    </location>
    <ligand>
        <name>UDP-alpha-D-glucose</name>
        <dbReference type="ChEBI" id="CHEBI:58885"/>
    </ligand>
</feature>
<feature type="binding site" evidence="1">
    <location>
        <position position="366"/>
    </location>
    <ligand>
        <name>UDP-alpha-D-glucose</name>
        <dbReference type="ChEBI" id="CHEBI:58885"/>
    </ligand>
</feature>
<feature type="binding site" evidence="1">
    <location>
        <position position="369"/>
    </location>
    <ligand>
        <name>UDP-alpha-D-glucose</name>
        <dbReference type="ChEBI" id="CHEBI:58885"/>
    </ligand>
</feature>
<feature type="binding site" evidence="2">
    <location>
        <position position="384"/>
    </location>
    <ligand>
        <name>an anthocyanidin</name>
        <dbReference type="ChEBI" id="CHEBI:143576"/>
    </ligand>
</feature>
<feature type="binding site" evidence="1">
    <location>
        <position position="385"/>
    </location>
    <ligand>
        <name>UDP-alpha-D-glucose</name>
        <dbReference type="ChEBI" id="CHEBI:58885"/>
    </ligand>
</feature>
<feature type="binding site" evidence="1">
    <location>
        <position position="386"/>
    </location>
    <ligand>
        <name>UDP-alpha-D-glucose</name>
        <dbReference type="ChEBI" id="CHEBI:58885"/>
    </ligand>
</feature>
<feature type="mutagenesis site" description="Gained ability to transfer a glucose residue to the C6-OH of protopanaxatriol (PPT); when associated with L-186 and G-338." evidence="3">
    <original>T</original>
    <variation>A</variation>
    <location>
        <position position="142"/>
    </location>
</feature>
<feature type="mutagenesis site" description="Gained ability to transfer a glucose residue to the C6-OH of protopanaxatriol (PPT); when associated with T-142 and G-338." evidence="3">
    <original>S</original>
    <variation>L</variation>
    <location>
        <position position="186"/>
    </location>
</feature>
<feature type="mutagenesis site" description="Gained ability to transfer a glucose residue to the C6-OH of protopanaxatriol (PPT); when associated with T-142 and L-186." evidence="3">
    <original>R</original>
    <variation>G</variation>
    <location>
        <position position="338"/>
    </location>
</feature>
<evidence type="ECO:0000250" key="1">
    <source>
        <dbReference type="UniProtKB" id="A0A0A1HA03"/>
    </source>
</evidence>
<evidence type="ECO:0000250" key="2">
    <source>
        <dbReference type="UniProtKB" id="P51094"/>
    </source>
</evidence>
<evidence type="ECO:0000269" key="3">
    <source>
    </source>
</evidence>
<evidence type="ECO:0000303" key="4">
    <source>
    </source>
</evidence>
<evidence type="ECO:0000305" key="5"/>
<evidence type="ECO:0000305" key="6">
    <source>
    </source>
</evidence>
<accession>A0A0K0PVL3</accession>
<keyword id="KW-0328">Glycosyltransferase</keyword>
<keyword id="KW-0414">Isoprene biosynthesis</keyword>
<keyword id="KW-0808">Transferase</keyword>
<sequence length="472" mass="53204">MKSELIFLPVPAFGHLVGMVEMAKLFISRHENLSVTVLISKFFIDTGIDNYNKSLLAKPTPRLTIINLPEIDPQKYLLKPRCAIFPSLIENQKTHVRDVMSRMTQSESTRIVGLLADILFVDIFDIADEFNVPTYVYSPAGTGFLGLAFHLQTLNDDKKQDVTEFRNSDTELLVPSFANPVPAEFSPSIFLEKDGRHDVLLSLYRRCREAKGIIVNTFEELEPYAINSLRMDSMIPPIYPVGPILNLNGEGQNSDEAAVILGWLDDQPPSSVVFLCFGSFGSFPENQVKEIAMGLERSGHRFLWSLRPCISEGETTLQLKYSNLELPAGFLDRTSCVRKVIGWAPQMAVLAHEAVGGFVSHCGWNSVLESVWYGMPVATWPMYGEQQLNAFEMVKELGLAVEIEVDYRNEYNKSDFIVKADEIETKIKKLMMDGKNSKIRKKVKEMKEKSRVAMSENGSSYTSLAKLFEEIM</sequence>
<reference key="1">
    <citation type="journal article" date="2015" name="Mol. Plant">
        <title>Characterization of Panax ginseng UDP-glycosyltransferases catalyzing protopanaxatriol and biosyntheses of bioactive ginsenosides F1 and Rh1 in metabolically engineered yeasts.</title>
        <authorList>
            <person name="Wei W."/>
            <person name="Wang P."/>
            <person name="Wei Y."/>
            <person name="Liu Q."/>
            <person name="Yang C."/>
            <person name="Zhao G."/>
            <person name="Yue J."/>
            <person name="Yan X."/>
            <person name="Zhou Z."/>
        </authorList>
    </citation>
    <scope>NUCLEOTIDE SEQUENCE [MRNA]</scope>
    <scope>FUNCTION</scope>
    <scope>MUTAGENESIS OF THR-142; SER-186 AND ARG-338</scope>
</reference>
<dbReference type="EC" id="2.4.1.366" evidence="6"/>
<dbReference type="EMBL" id="KP795116">
    <property type="protein sequence ID" value="AKQ76391.1"/>
    <property type="molecule type" value="mRNA"/>
</dbReference>
<dbReference type="SMR" id="A0A0K0PVL3"/>
<dbReference type="UniPathway" id="UPA00213"/>
<dbReference type="GO" id="GO:0035251">
    <property type="term" value="F:UDP-glucosyltransferase activity"/>
    <property type="evidence" value="ECO:0007669"/>
    <property type="project" value="InterPro"/>
</dbReference>
<dbReference type="GO" id="GO:0016114">
    <property type="term" value="P:terpenoid biosynthetic process"/>
    <property type="evidence" value="ECO:0007669"/>
    <property type="project" value="UniProtKB-UniPathway"/>
</dbReference>
<dbReference type="CDD" id="cd03784">
    <property type="entry name" value="GT1_Gtf-like"/>
    <property type="match status" value="1"/>
</dbReference>
<dbReference type="FunFam" id="3.40.50.2000:FF:000056">
    <property type="entry name" value="Glycosyltransferase"/>
    <property type="match status" value="1"/>
</dbReference>
<dbReference type="FunFam" id="3.40.50.2000:FF:000080">
    <property type="entry name" value="Glycosyltransferase"/>
    <property type="match status" value="1"/>
</dbReference>
<dbReference type="Gene3D" id="3.40.50.2000">
    <property type="entry name" value="Glycogen Phosphorylase B"/>
    <property type="match status" value="2"/>
</dbReference>
<dbReference type="InterPro" id="IPR050481">
    <property type="entry name" value="UDP-glycosyltransf_plant"/>
</dbReference>
<dbReference type="InterPro" id="IPR002213">
    <property type="entry name" value="UDP_glucos_trans"/>
</dbReference>
<dbReference type="InterPro" id="IPR035595">
    <property type="entry name" value="UDP_glycos_trans_CS"/>
</dbReference>
<dbReference type="PANTHER" id="PTHR48048">
    <property type="entry name" value="GLYCOSYLTRANSFERASE"/>
    <property type="match status" value="1"/>
</dbReference>
<dbReference type="PANTHER" id="PTHR48048:SF45">
    <property type="entry name" value="GLYCOSYLTRANSFERASE"/>
    <property type="match status" value="1"/>
</dbReference>
<dbReference type="Pfam" id="PF00201">
    <property type="entry name" value="UDPGT"/>
    <property type="match status" value="1"/>
</dbReference>
<dbReference type="SUPFAM" id="SSF53756">
    <property type="entry name" value="UDP-Glycosyltransferase/glycogen phosphorylase"/>
    <property type="match status" value="1"/>
</dbReference>
<dbReference type="PROSITE" id="PS00375">
    <property type="entry name" value="UDPGT"/>
    <property type="match status" value="1"/>
</dbReference>